<keyword id="KW-0025">Alternative splicing</keyword>
<keyword id="KW-0067">ATP-binding</keyword>
<keyword id="KW-0175">Coiled coil</keyword>
<keyword id="KW-0547">Nucleotide-binding</keyword>
<keyword id="KW-1185">Reference proteome</keyword>
<feature type="chain" id="PRO_0000283000" description="Schlafen-like protein 1">
    <location>
        <begin position="1"/>
        <end position="410"/>
    </location>
</feature>
<feature type="region of interest" description="Disordered" evidence="2">
    <location>
        <begin position="1"/>
        <end position="20"/>
    </location>
</feature>
<feature type="region of interest" description="Disordered" evidence="2">
    <location>
        <begin position="141"/>
        <end position="199"/>
    </location>
</feature>
<feature type="coiled-coil region" evidence="1">
    <location>
        <begin position="370"/>
        <end position="401"/>
    </location>
</feature>
<feature type="compositionally biased region" description="Polar residues" evidence="2">
    <location>
        <begin position="8"/>
        <end position="20"/>
    </location>
</feature>
<feature type="compositionally biased region" description="Pro residues" evidence="2">
    <location>
        <begin position="154"/>
        <end position="173"/>
    </location>
</feature>
<feature type="binding site" evidence="1">
    <location>
        <begin position="264"/>
        <end position="271"/>
    </location>
    <ligand>
        <name>ATP</name>
        <dbReference type="ChEBI" id="CHEBI:30616"/>
    </ligand>
</feature>
<feature type="splice variant" id="VSP_024279" description="In isoform 2." evidence="3">
    <location>
        <position position="146"/>
    </location>
</feature>
<gene>
    <name type="primary">Slfnl1</name>
</gene>
<proteinExistence type="evidence at transcript level"/>
<sequence length="410" mass="45595">MSLRKRSAQTQMWESPVMSQGKQSLLELPLKESPPKDSGLKAVPSTHTLYVSHLNPQFSVPVLACLLRDTLERLELPVARGQIEVVRRPRNTYALVQVAAPKAVLASLPWRLQMALEEQLILKELTARGKELVLSEALESLHHREQEDSGPSPSHSPGPSPGPSPGLRHPPLPQLADPSPIWGSAGRRQISQNRPSGVRSDSAIVHHKILGQEQLFQGAFLGSETRNMEFKRGSGEYLSLAFKHHVRRYVCAFLNSEGGSLLVGVEDSGLVQGIHCSHRDEDRTRLLVDSILQGFKPQVFPDAYTLTFIPVISTTTTSTPLKVLRLTVHTPKAQGEPQLYETDQGEVFLRRDGSIQGPLSVGAIQDWCRQKWAMELGKLEEKVKVLTLEKEQLQQQLRQRQPLSCSCCVL</sequence>
<organism>
    <name type="scientific">Mus musculus</name>
    <name type="common">Mouse</name>
    <dbReference type="NCBI Taxonomy" id="10090"/>
    <lineage>
        <taxon>Eukaryota</taxon>
        <taxon>Metazoa</taxon>
        <taxon>Chordata</taxon>
        <taxon>Craniata</taxon>
        <taxon>Vertebrata</taxon>
        <taxon>Euteleostomi</taxon>
        <taxon>Mammalia</taxon>
        <taxon>Eutheria</taxon>
        <taxon>Euarchontoglires</taxon>
        <taxon>Glires</taxon>
        <taxon>Rodentia</taxon>
        <taxon>Myomorpha</taxon>
        <taxon>Muroidea</taxon>
        <taxon>Muridae</taxon>
        <taxon>Murinae</taxon>
        <taxon>Mus</taxon>
        <taxon>Mus</taxon>
    </lineage>
</organism>
<dbReference type="EMBL" id="AK077106">
    <property type="protein sequence ID" value="BAC36615.1"/>
    <property type="molecule type" value="mRNA"/>
</dbReference>
<dbReference type="EMBL" id="AL611924">
    <property type="status" value="NOT_ANNOTATED_CDS"/>
    <property type="molecule type" value="Genomic_DNA"/>
</dbReference>
<dbReference type="EMBL" id="BC117545">
    <property type="protein sequence ID" value="AAI17546.1"/>
    <property type="molecule type" value="mRNA"/>
</dbReference>
<dbReference type="EMBL" id="BC118052">
    <property type="protein sequence ID" value="AAI18053.1"/>
    <property type="molecule type" value="mRNA"/>
</dbReference>
<dbReference type="CCDS" id="CCDS18590.1">
    <molecule id="Q8BHW9-1"/>
</dbReference>
<dbReference type="RefSeq" id="NP_001406272.1">
    <molecule id="Q8BHW9-2"/>
    <property type="nucleotide sequence ID" value="NM_001419343.1"/>
</dbReference>
<dbReference type="RefSeq" id="NP_808238.1">
    <molecule id="Q8BHW9-1"/>
    <property type="nucleotide sequence ID" value="NM_177570.4"/>
</dbReference>
<dbReference type="RefSeq" id="XP_017175572.1">
    <property type="nucleotide sequence ID" value="XM_017320083.1"/>
</dbReference>
<dbReference type="STRING" id="10090.ENSMUSP00000050896"/>
<dbReference type="iPTMnet" id="Q8BHW9"/>
<dbReference type="PhosphoSitePlus" id="Q8BHW9"/>
<dbReference type="SwissPalm" id="Q8BHW9"/>
<dbReference type="PaxDb" id="10090-ENSMUSP00000050896"/>
<dbReference type="ProteomicsDB" id="261193">
    <molecule id="Q8BHW9-1"/>
</dbReference>
<dbReference type="ProteomicsDB" id="261194">
    <molecule id="Q8BHW9-2"/>
</dbReference>
<dbReference type="Antibodypedia" id="32165">
    <property type="antibodies" value="277 antibodies from 24 providers"/>
</dbReference>
<dbReference type="Ensembl" id="ENSMUST00000062990.4">
    <molecule id="Q8BHW9-1"/>
    <property type="protein sequence ID" value="ENSMUSP00000050896.4"/>
    <property type="gene ID" value="ENSMUSG00000047518.4"/>
</dbReference>
<dbReference type="GeneID" id="194219"/>
<dbReference type="KEGG" id="mmu:194219"/>
<dbReference type="UCSC" id="uc008unh.1">
    <molecule id="Q8BHW9-1"/>
    <property type="organism name" value="mouse"/>
</dbReference>
<dbReference type="UCSC" id="uc012dkj.1">
    <molecule id="Q8BHW9-2"/>
    <property type="organism name" value="mouse"/>
</dbReference>
<dbReference type="AGR" id="MGI:3045330"/>
<dbReference type="CTD" id="200172"/>
<dbReference type="MGI" id="MGI:3045330">
    <property type="gene designation" value="Slfnl1"/>
</dbReference>
<dbReference type="VEuPathDB" id="HostDB:ENSMUSG00000047518"/>
<dbReference type="eggNOG" id="ENOG502QTT1">
    <property type="taxonomic scope" value="Eukaryota"/>
</dbReference>
<dbReference type="GeneTree" id="ENSGT00410000025651"/>
<dbReference type="HOGENOM" id="CLU_034269_0_0_1"/>
<dbReference type="InParanoid" id="Q8BHW9"/>
<dbReference type="OMA" id="PISCTCC"/>
<dbReference type="OrthoDB" id="10259112at2759"/>
<dbReference type="PhylomeDB" id="Q8BHW9"/>
<dbReference type="TreeFam" id="TF337569"/>
<dbReference type="BioGRID-ORCS" id="194219">
    <property type="hits" value="2 hits in 78 CRISPR screens"/>
</dbReference>
<dbReference type="PRO" id="PR:Q8BHW9"/>
<dbReference type="Proteomes" id="UP000000589">
    <property type="component" value="Chromosome 4"/>
</dbReference>
<dbReference type="RNAct" id="Q8BHW9">
    <property type="molecule type" value="protein"/>
</dbReference>
<dbReference type="Bgee" id="ENSMUSG00000047518">
    <property type="expression patterns" value="Expressed in seminiferous tubule of testis and 8 other cell types or tissues"/>
</dbReference>
<dbReference type="GO" id="GO:0005524">
    <property type="term" value="F:ATP binding"/>
    <property type="evidence" value="ECO:0007669"/>
    <property type="project" value="UniProtKB-KW"/>
</dbReference>
<dbReference type="Gene3D" id="3.30.950.30">
    <property type="entry name" value="Schlafen, AAA domain"/>
    <property type="match status" value="1"/>
</dbReference>
<dbReference type="InterPro" id="IPR029684">
    <property type="entry name" value="Schlafen"/>
</dbReference>
<dbReference type="InterPro" id="IPR007421">
    <property type="entry name" value="Schlafen_AlbA_2_dom"/>
</dbReference>
<dbReference type="InterPro" id="IPR038461">
    <property type="entry name" value="Schlafen_AlbA_2_dom_sf"/>
</dbReference>
<dbReference type="PANTHER" id="PTHR12155">
    <property type="entry name" value="SCHLAFEN"/>
    <property type="match status" value="1"/>
</dbReference>
<dbReference type="PANTHER" id="PTHR12155:SF29">
    <property type="entry name" value="SCHLAFEN-LIKE PROTEIN 1"/>
    <property type="match status" value="1"/>
</dbReference>
<dbReference type="Pfam" id="PF04326">
    <property type="entry name" value="SLFN_AlbA_2"/>
    <property type="match status" value="1"/>
</dbReference>
<protein>
    <recommendedName>
        <fullName>Schlafen-like protein 1</fullName>
    </recommendedName>
</protein>
<comment type="alternative products">
    <event type="alternative splicing"/>
    <isoform>
        <id>Q8BHW9-1</id>
        <name>1</name>
        <sequence type="displayed"/>
    </isoform>
    <isoform>
        <id>Q8BHW9-2</id>
        <name>2</name>
        <sequence type="described" ref="VSP_024279"/>
    </isoform>
</comment>
<comment type="similarity">
    <text evidence="4">Belongs to the Schlafen family. Subgroup I subfamily.</text>
</comment>
<name>SLNL1_MOUSE</name>
<accession>Q8BHW9</accession>
<accession>Q149Q6</accession>
<evidence type="ECO:0000255" key="1"/>
<evidence type="ECO:0000256" key="2">
    <source>
        <dbReference type="SAM" id="MobiDB-lite"/>
    </source>
</evidence>
<evidence type="ECO:0000303" key="3">
    <source>
    </source>
</evidence>
<evidence type="ECO:0000305" key="4"/>
<reference key="1">
    <citation type="journal article" date="2005" name="Science">
        <title>The transcriptional landscape of the mammalian genome.</title>
        <authorList>
            <person name="Carninci P."/>
            <person name="Kasukawa T."/>
            <person name="Katayama S."/>
            <person name="Gough J."/>
            <person name="Frith M.C."/>
            <person name="Maeda N."/>
            <person name="Oyama R."/>
            <person name="Ravasi T."/>
            <person name="Lenhard B."/>
            <person name="Wells C."/>
            <person name="Kodzius R."/>
            <person name="Shimokawa K."/>
            <person name="Bajic V.B."/>
            <person name="Brenner S.E."/>
            <person name="Batalov S."/>
            <person name="Forrest A.R."/>
            <person name="Zavolan M."/>
            <person name="Davis M.J."/>
            <person name="Wilming L.G."/>
            <person name="Aidinis V."/>
            <person name="Allen J.E."/>
            <person name="Ambesi-Impiombato A."/>
            <person name="Apweiler R."/>
            <person name="Aturaliya R.N."/>
            <person name="Bailey T.L."/>
            <person name="Bansal M."/>
            <person name="Baxter L."/>
            <person name="Beisel K.W."/>
            <person name="Bersano T."/>
            <person name="Bono H."/>
            <person name="Chalk A.M."/>
            <person name="Chiu K.P."/>
            <person name="Choudhary V."/>
            <person name="Christoffels A."/>
            <person name="Clutterbuck D.R."/>
            <person name="Crowe M.L."/>
            <person name="Dalla E."/>
            <person name="Dalrymple B.P."/>
            <person name="de Bono B."/>
            <person name="Della Gatta G."/>
            <person name="di Bernardo D."/>
            <person name="Down T."/>
            <person name="Engstrom P."/>
            <person name="Fagiolini M."/>
            <person name="Faulkner G."/>
            <person name="Fletcher C.F."/>
            <person name="Fukushima T."/>
            <person name="Furuno M."/>
            <person name="Futaki S."/>
            <person name="Gariboldi M."/>
            <person name="Georgii-Hemming P."/>
            <person name="Gingeras T.R."/>
            <person name="Gojobori T."/>
            <person name="Green R.E."/>
            <person name="Gustincich S."/>
            <person name="Harbers M."/>
            <person name="Hayashi Y."/>
            <person name="Hensch T.K."/>
            <person name="Hirokawa N."/>
            <person name="Hill D."/>
            <person name="Huminiecki L."/>
            <person name="Iacono M."/>
            <person name="Ikeo K."/>
            <person name="Iwama A."/>
            <person name="Ishikawa T."/>
            <person name="Jakt M."/>
            <person name="Kanapin A."/>
            <person name="Katoh M."/>
            <person name="Kawasawa Y."/>
            <person name="Kelso J."/>
            <person name="Kitamura H."/>
            <person name="Kitano H."/>
            <person name="Kollias G."/>
            <person name="Krishnan S.P."/>
            <person name="Kruger A."/>
            <person name="Kummerfeld S.K."/>
            <person name="Kurochkin I.V."/>
            <person name="Lareau L.F."/>
            <person name="Lazarevic D."/>
            <person name="Lipovich L."/>
            <person name="Liu J."/>
            <person name="Liuni S."/>
            <person name="McWilliam S."/>
            <person name="Madan Babu M."/>
            <person name="Madera M."/>
            <person name="Marchionni L."/>
            <person name="Matsuda H."/>
            <person name="Matsuzawa S."/>
            <person name="Miki H."/>
            <person name="Mignone F."/>
            <person name="Miyake S."/>
            <person name="Morris K."/>
            <person name="Mottagui-Tabar S."/>
            <person name="Mulder N."/>
            <person name="Nakano N."/>
            <person name="Nakauchi H."/>
            <person name="Ng P."/>
            <person name="Nilsson R."/>
            <person name="Nishiguchi S."/>
            <person name="Nishikawa S."/>
            <person name="Nori F."/>
            <person name="Ohara O."/>
            <person name="Okazaki Y."/>
            <person name="Orlando V."/>
            <person name="Pang K.C."/>
            <person name="Pavan W.J."/>
            <person name="Pavesi G."/>
            <person name="Pesole G."/>
            <person name="Petrovsky N."/>
            <person name="Piazza S."/>
            <person name="Reed J."/>
            <person name="Reid J.F."/>
            <person name="Ring B.Z."/>
            <person name="Ringwald M."/>
            <person name="Rost B."/>
            <person name="Ruan Y."/>
            <person name="Salzberg S.L."/>
            <person name="Sandelin A."/>
            <person name="Schneider C."/>
            <person name="Schoenbach C."/>
            <person name="Sekiguchi K."/>
            <person name="Semple C.A."/>
            <person name="Seno S."/>
            <person name="Sessa L."/>
            <person name="Sheng Y."/>
            <person name="Shibata Y."/>
            <person name="Shimada H."/>
            <person name="Shimada K."/>
            <person name="Silva D."/>
            <person name="Sinclair B."/>
            <person name="Sperling S."/>
            <person name="Stupka E."/>
            <person name="Sugiura K."/>
            <person name="Sultana R."/>
            <person name="Takenaka Y."/>
            <person name="Taki K."/>
            <person name="Tammoja K."/>
            <person name="Tan S.L."/>
            <person name="Tang S."/>
            <person name="Taylor M.S."/>
            <person name="Tegner J."/>
            <person name="Teichmann S.A."/>
            <person name="Ueda H.R."/>
            <person name="van Nimwegen E."/>
            <person name="Verardo R."/>
            <person name="Wei C.L."/>
            <person name="Yagi K."/>
            <person name="Yamanishi H."/>
            <person name="Zabarovsky E."/>
            <person name="Zhu S."/>
            <person name="Zimmer A."/>
            <person name="Hide W."/>
            <person name="Bult C."/>
            <person name="Grimmond S.M."/>
            <person name="Teasdale R.D."/>
            <person name="Liu E.T."/>
            <person name="Brusic V."/>
            <person name="Quackenbush J."/>
            <person name="Wahlestedt C."/>
            <person name="Mattick J.S."/>
            <person name="Hume D.A."/>
            <person name="Kai C."/>
            <person name="Sasaki D."/>
            <person name="Tomaru Y."/>
            <person name="Fukuda S."/>
            <person name="Kanamori-Katayama M."/>
            <person name="Suzuki M."/>
            <person name="Aoki J."/>
            <person name="Arakawa T."/>
            <person name="Iida J."/>
            <person name="Imamura K."/>
            <person name="Itoh M."/>
            <person name="Kato T."/>
            <person name="Kawaji H."/>
            <person name="Kawagashira N."/>
            <person name="Kawashima T."/>
            <person name="Kojima M."/>
            <person name="Kondo S."/>
            <person name="Konno H."/>
            <person name="Nakano K."/>
            <person name="Ninomiya N."/>
            <person name="Nishio T."/>
            <person name="Okada M."/>
            <person name="Plessy C."/>
            <person name="Shibata K."/>
            <person name="Shiraki T."/>
            <person name="Suzuki S."/>
            <person name="Tagami M."/>
            <person name="Waki K."/>
            <person name="Watahiki A."/>
            <person name="Okamura-Oho Y."/>
            <person name="Suzuki H."/>
            <person name="Kawai J."/>
            <person name="Hayashizaki Y."/>
        </authorList>
    </citation>
    <scope>NUCLEOTIDE SEQUENCE [LARGE SCALE MRNA] (ISOFORM 1)</scope>
    <source>
        <strain>C57BL/6J</strain>
        <tissue>Testis</tissue>
    </source>
</reference>
<reference key="2">
    <citation type="journal article" date="2009" name="PLoS Biol.">
        <title>Lineage-specific biology revealed by a finished genome assembly of the mouse.</title>
        <authorList>
            <person name="Church D.M."/>
            <person name="Goodstadt L."/>
            <person name="Hillier L.W."/>
            <person name="Zody M.C."/>
            <person name="Goldstein S."/>
            <person name="She X."/>
            <person name="Bult C.J."/>
            <person name="Agarwala R."/>
            <person name="Cherry J.L."/>
            <person name="DiCuccio M."/>
            <person name="Hlavina W."/>
            <person name="Kapustin Y."/>
            <person name="Meric P."/>
            <person name="Maglott D."/>
            <person name="Birtle Z."/>
            <person name="Marques A.C."/>
            <person name="Graves T."/>
            <person name="Zhou S."/>
            <person name="Teague B."/>
            <person name="Potamousis K."/>
            <person name="Churas C."/>
            <person name="Place M."/>
            <person name="Herschleb J."/>
            <person name="Runnheim R."/>
            <person name="Forrest D."/>
            <person name="Amos-Landgraf J."/>
            <person name="Schwartz D.C."/>
            <person name="Cheng Z."/>
            <person name="Lindblad-Toh K."/>
            <person name="Eichler E.E."/>
            <person name="Ponting C.P."/>
        </authorList>
    </citation>
    <scope>NUCLEOTIDE SEQUENCE [LARGE SCALE GENOMIC DNA]</scope>
    <source>
        <strain>C57BL/6J</strain>
    </source>
</reference>
<reference key="3">
    <citation type="journal article" date="2004" name="Genome Res.">
        <title>The status, quality, and expansion of the NIH full-length cDNA project: the Mammalian Gene Collection (MGC).</title>
        <authorList>
            <consortium name="The MGC Project Team"/>
        </authorList>
    </citation>
    <scope>NUCLEOTIDE SEQUENCE [LARGE SCALE MRNA] (ISOFORMS 1 AND 2)</scope>
</reference>